<organism>
    <name type="scientific">Pseudomonas savastanoi pv. phaseolicola</name>
    <name type="common">Pseudomonas syringae pv. phaseolicola</name>
    <dbReference type="NCBI Taxonomy" id="319"/>
    <lineage>
        <taxon>Bacteria</taxon>
        <taxon>Pseudomonadati</taxon>
        <taxon>Pseudomonadota</taxon>
        <taxon>Gammaproteobacteria</taxon>
        <taxon>Pseudomonadales</taxon>
        <taxon>Pseudomonadaceae</taxon>
        <taxon>Pseudomonas</taxon>
    </lineage>
</organism>
<accession>P68747</accession>
<accession>P23752</accession>
<keyword id="KW-0028">Amino-acid biosynthesis</keyword>
<keyword id="KW-0055">Arginine biosynthesis</keyword>
<keyword id="KW-0963">Cytoplasm</keyword>
<keyword id="KW-0808">Transferase</keyword>
<keyword id="KW-0843">Virulence</keyword>
<reference key="1">
    <citation type="journal article" date="1990" name="Mol. Gen. Genet.">
        <title>Isolation and characterization of the gene from Pseudomonas syringae pv. phaseolicola encoding the phaseolotoxin-insensitive ornithine carbamoyltransferase.</title>
        <authorList>
            <person name="Mosqueda G."/>
            <person name="van den Broeck G."/>
            <person name="Saucedo O."/>
            <person name="Bailey A.M."/>
            <person name="Alvarez-Morales A."/>
            <person name="Herrera-Estrella L."/>
        </authorList>
    </citation>
    <scope>NUCLEOTIDE SEQUENCE [GENOMIC DNA]</scope>
    <scope>NOMENCLATURE</scope>
    <source>
        <strain>Isolate Texcoco</strain>
    </source>
</reference>
<reference key="2">
    <citation type="journal article" date="1992" name="J. Bacteriol.">
        <title>Origin, structure, and regulation of argK, encoding the phaseolotoxin-resistant ornithine carbamoyltransferase in Pseudomonas syringae pv. phaseolicola, and functional expression of argK in transgenic tobacco.</title>
        <authorList>
            <person name="Hatziloukas E."/>
            <person name="Panopoulos N.J."/>
        </authorList>
    </citation>
    <scope>NUCLEOTIDE SEQUENCE [GENOMIC DNA]</scope>
    <scope>FUNCTION IN THE PHASEOLOTOXIN-RESISTANCE</scope>
    <source>
        <strain>NPS 3121</strain>
    </source>
</reference>
<reference key="3">
    <citation type="journal article" date="1987" name="Arch. Microbiol.">
        <title>Characterization of two ornithine carbamoyltransferases from Pseudomonas syringae pv. phaseolicola, the producer of phaseolotoxin.</title>
        <authorList>
            <person name="Jahn O."/>
            <person name="Sauerstein J."/>
            <person name="Reuter G."/>
        </authorList>
    </citation>
    <scope>FUNCTION AS AN OTCASE</scope>
    <scope>CATALYTIC ACTIVITY</scope>
    <scope>BIOPHYSICOCHEMICAL PROPERTIES</scope>
    <scope>PATHWAY</scope>
</reference>
<reference key="4">
    <citation type="journal article" date="1987" name="EMBO J.">
        <title>Ornithine carbamoyltransferase genes and phaseolotoxin immunity in Pseudomonas syringae pv. phaseolicola.</title>
        <authorList>
            <person name="Peet R.C."/>
            <person name="Panopoulos N.J."/>
        </authorList>
    </citation>
    <scope>FUNCTION IN THE PHASEOLOTOXIN-RESISTANCE</scope>
    <source>
        <strain>NPS 3121</strain>
    </source>
</reference>
<reference key="5">
    <citation type="journal article" date="2004" name="J. Bacteriol.">
        <title>In Pseudomonas syringae pv. phaseolicola, expression of the argK gene, encoding the phaseolotoxin-resistant ornithine carbamoyltransferase, is regulated indirectly by temperature and directly by a precursor resembling carbamoylphosphate.</title>
        <authorList>
            <person name="Lopez-Lopez K."/>
            <person name="Hernandez-Flores J.L."/>
            <person name="Cruz-Aguilar M."/>
            <person name="Alvarez-Morales A."/>
        </authorList>
    </citation>
    <scope>INDUCTION</scope>
    <source>
        <strain>NPS 3121</strain>
    </source>
</reference>
<reference key="6">
    <citation type="journal article" date="2004" name="J. Bacteriol.">
        <title>The global arginine regulator ArgR controls expression of argF in Pseudomonas syringae pv. phaseolicola but is not required for the synthesis of phaseolotoxin or for the regulated expression of argK.</title>
        <authorList>
            <person name="Hernandez-Flores J.L."/>
            <person name="Lopez-Lopez K."/>
            <person name="Garciduenas-Pina R."/>
            <person name="Jofre-Garfias A.E."/>
            <person name="Alvarez-Morales A."/>
        </authorList>
    </citation>
    <scope>INDUCTION</scope>
    <source>
        <strain>NPS 3121</strain>
    </source>
</reference>
<dbReference type="EC" id="2.1.3.3" evidence="12"/>
<dbReference type="EMBL" id="M94049">
    <property type="protein sequence ID" value="AAA25722.1"/>
    <property type="molecule type" value="Genomic_DNA"/>
</dbReference>
<dbReference type="EMBL" id="X55520">
    <property type="protein sequence ID" value="CAA39136.1"/>
    <property type="molecule type" value="Genomic_DNA"/>
</dbReference>
<dbReference type="PIR" id="S11943">
    <property type="entry name" value="OWPSY"/>
</dbReference>
<dbReference type="SMR" id="P68747"/>
<dbReference type="OMA" id="YGMKGLE"/>
<dbReference type="BRENDA" id="2.1.3.3">
    <property type="organism ID" value="5194"/>
</dbReference>
<dbReference type="SABIO-RK" id="P68747"/>
<dbReference type="UniPathway" id="UPA00068">
    <property type="reaction ID" value="UER00112"/>
</dbReference>
<dbReference type="GO" id="GO:0005737">
    <property type="term" value="C:cytoplasm"/>
    <property type="evidence" value="ECO:0007669"/>
    <property type="project" value="UniProtKB-SubCell"/>
</dbReference>
<dbReference type="GO" id="GO:0016597">
    <property type="term" value="F:amino acid binding"/>
    <property type="evidence" value="ECO:0007669"/>
    <property type="project" value="InterPro"/>
</dbReference>
<dbReference type="GO" id="GO:0004585">
    <property type="term" value="F:ornithine carbamoyltransferase activity"/>
    <property type="evidence" value="ECO:0007669"/>
    <property type="project" value="UniProtKB-UniRule"/>
</dbReference>
<dbReference type="GO" id="GO:0042450">
    <property type="term" value="P:arginine biosynthetic process via ornithine"/>
    <property type="evidence" value="ECO:0007669"/>
    <property type="project" value="TreeGrafter"/>
</dbReference>
<dbReference type="GO" id="GO:0019240">
    <property type="term" value="P:citrulline biosynthetic process"/>
    <property type="evidence" value="ECO:0007669"/>
    <property type="project" value="TreeGrafter"/>
</dbReference>
<dbReference type="GO" id="GO:0006526">
    <property type="term" value="P:L-arginine biosynthetic process"/>
    <property type="evidence" value="ECO:0007669"/>
    <property type="project" value="UniProtKB-UniPathway"/>
</dbReference>
<dbReference type="FunFam" id="3.40.50.1370:FF:000008">
    <property type="entry name" value="Ornithine carbamoyltransferase"/>
    <property type="match status" value="1"/>
</dbReference>
<dbReference type="Gene3D" id="3.40.50.1370">
    <property type="entry name" value="Aspartate/ornithine carbamoyltransferase"/>
    <property type="match status" value="2"/>
</dbReference>
<dbReference type="HAMAP" id="MF_01109">
    <property type="entry name" value="OTCase"/>
    <property type="match status" value="1"/>
</dbReference>
<dbReference type="InterPro" id="IPR006132">
    <property type="entry name" value="Asp/Orn_carbamoyltranf_P-bd"/>
</dbReference>
<dbReference type="InterPro" id="IPR006130">
    <property type="entry name" value="Asp/Orn_carbamoylTrfase"/>
</dbReference>
<dbReference type="InterPro" id="IPR036901">
    <property type="entry name" value="Asp/Orn_carbamoylTrfase_sf"/>
</dbReference>
<dbReference type="InterPro" id="IPR006131">
    <property type="entry name" value="Asp_carbamoyltransf_Asp/Orn-bd"/>
</dbReference>
<dbReference type="InterPro" id="IPR002292">
    <property type="entry name" value="Orn/put_carbamltrans"/>
</dbReference>
<dbReference type="InterPro" id="IPR024904">
    <property type="entry name" value="OTCase_ArgI"/>
</dbReference>
<dbReference type="NCBIfam" id="TIGR00658">
    <property type="entry name" value="orni_carb_tr"/>
    <property type="match status" value="1"/>
</dbReference>
<dbReference type="PANTHER" id="PTHR45753:SF2">
    <property type="entry name" value="ORNITHINE CARBAMOYLTRANSFERASE"/>
    <property type="match status" value="1"/>
</dbReference>
<dbReference type="PANTHER" id="PTHR45753">
    <property type="entry name" value="ORNITHINE CARBAMOYLTRANSFERASE, MITOCHONDRIAL"/>
    <property type="match status" value="1"/>
</dbReference>
<dbReference type="Pfam" id="PF00185">
    <property type="entry name" value="OTCace"/>
    <property type="match status" value="1"/>
</dbReference>
<dbReference type="Pfam" id="PF02729">
    <property type="entry name" value="OTCace_N"/>
    <property type="match status" value="1"/>
</dbReference>
<dbReference type="PRINTS" id="PR00100">
    <property type="entry name" value="AOTCASE"/>
</dbReference>
<dbReference type="PRINTS" id="PR00102">
    <property type="entry name" value="OTCASE"/>
</dbReference>
<dbReference type="SUPFAM" id="SSF53671">
    <property type="entry name" value="Aspartate/ornithine carbamoyltransferase"/>
    <property type="match status" value="1"/>
</dbReference>
<dbReference type="PROSITE" id="PS00097">
    <property type="entry name" value="CARBAMOYLTRANSFERASE"/>
    <property type="match status" value="1"/>
</dbReference>
<evidence type="ECO:0000250" key="1"/>
<evidence type="ECO:0000255" key="2">
    <source>
        <dbReference type="HAMAP-Rule" id="MF_01109"/>
    </source>
</evidence>
<evidence type="ECO:0000269" key="3">
    <source>
    </source>
</evidence>
<evidence type="ECO:0000269" key="4">
    <source>
    </source>
</evidence>
<evidence type="ECO:0000269" key="5">
    <source>
    </source>
</evidence>
<evidence type="ECO:0000269" key="6">
    <source>
    </source>
</evidence>
<evidence type="ECO:0000269" key="7">
    <source>
    </source>
</evidence>
<evidence type="ECO:0000303" key="8">
    <source>
    </source>
</evidence>
<evidence type="ECO:0000303" key="9">
    <source>
    </source>
</evidence>
<evidence type="ECO:0000303" key="10">
    <source>
    </source>
</evidence>
<evidence type="ECO:0000305" key="11"/>
<evidence type="ECO:0000305" key="12">
    <source>
    </source>
</evidence>
<comment type="function">
    <text evidence="5 6 7">Plays an important role in the survival and pathogenicity of P.syringae (PubMed:1522066). Phaseolotoxin is a virulence factor that inhibits the catalysis of the host OTCase (PubMed:1522066, PubMed:16453811). Phaseolotoxin-producing bacteria do not suffer autointoxication because they possess the anabolic OTCase ArgK which can function even in the presence of phaseolotoxin (PubMed:1522066, PubMed:16453811, PubMed:3592910). Reversibly catalyzes the transfer of the carbamoyl group from carbamoyl phosphate (CP) to the N(epsilon) atom of ornithine (ORN) to produce L-citrulline, which is a substrate for argininosuccinate synthetase, the enzyme involved in the final step in arginine biosynthesis (PubMed:3592910).</text>
</comment>
<comment type="catalytic activity">
    <reaction evidence="12">
        <text>carbamoyl phosphate + L-ornithine = L-citrulline + phosphate + H(+)</text>
        <dbReference type="Rhea" id="RHEA:19513"/>
        <dbReference type="ChEBI" id="CHEBI:15378"/>
        <dbReference type="ChEBI" id="CHEBI:43474"/>
        <dbReference type="ChEBI" id="CHEBI:46911"/>
        <dbReference type="ChEBI" id="CHEBI:57743"/>
        <dbReference type="ChEBI" id="CHEBI:58228"/>
        <dbReference type="EC" id="2.1.3.3"/>
    </reaction>
</comment>
<comment type="biophysicochemical properties">
    <kinetics>
        <KM evidence="7">0.7 mM for L-ornithine</KM>
        <KM evidence="7">2.8 mM for carbamoyl phosphate</KM>
    </kinetics>
    <phDependence>
        <text evidence="7">Optimum pH is 8.4.</text>
    </phDependence>
</comment>
<comment type="pathway">
    <text evidence="12">Amino-acid biosynthesis; L-arginine biosynthesis; L-arginine from L-ornithine and carbamoyl phosphate: step 1/3.</text>
</comment>
<comment type="subunit">
    <text evidence="2">Homotrimer.</text>
</comment>
<comment type="subcellular location">
    <subcellularLocation>
        <location evidence="11">Cytoplasm</location>
    </subcellularLocation>
</comment>
<comment type="induction">
    <text evidence="3 4">By N-sulfodiaminophosphinyl, the inorganic moiety of phaseolotoxin, at 18 degrees Celsius.</text>
</comment>
<comment type="miscellaneous">
    <text evidence="7">This enzyme is insensitive to phaseolotoxin, a potent inhibitor of OTCase.</text>
</comment>
<comment type="similarity">
    <text evidence="11">Belongs to the aspartate/ornithine carbamoyltransferase superfamily. OTCase family.</text>
</comment>
<comment type="caution">
    <text evidence="11">Lacks the conserved threonine residue in position 60, which is part of the carbamoylphosphate binding site; it is replaced by a glycine residue.</text>
</comment>
<name>OTC2A_PSESH</name>
<proteinExistence type="evidence at protein level"/>
<protein>
    <recommendedName>
        <fullName evidence="10">Ornithine carbamoyltransferase 2, anabolic</fullName>
        <shortName evidence="10">OTCase 2</shortName>
        <ecNumber evidence="12">2.1.3.3</ecNumber>
    </recommendedName>
    <alternativeName>
        <fullName evidence="9">Ornithine carbamoyltransferase 2, phaseolotoxin-insensitive</fullName>
    </alternativeName>
    <alternativeName>
        <fullName evidence="8">Phaseolotoxin-resistant ornithine carbamoyltransferase</fullName>
    </alternativeName>
    <alternativeName>
        <fullName evidence="9">Toxin-resistant enzyme</fullName>
        <shortName evidence="8">ROCT</shortName>
    </alternativeName>
</protein>
<gene>
    <name evidence="8" type="primary">argK</name>
</gene>
<feature type="initiator methionine" description="Removed" evidence="1">
    <location>
        <position position="1"/>
    </location>
</feature>
<feature type="chain" id="PRO_0000112992" description="Ornithine carbamoyltransferase 2, anabolic">
    <location>
        <begin position="2"/>
        <end position="327"/>
    </location>
</feature>
<feature type="binding site" evidence="2">
    <location>
        <position position="109"/>
    </location>
    <ligand>
        <name>carbamoyl phosphate</name>
        <dbReference type="ChEBI" id="CHEBI:58228"/>
    </ligand>
</feature>
<feature type="binding site" evidence="2">
    <location>
        <begin position="136"/>
        <end position="139"/>
    </location>
    <ligand>
        <name>carbamoyl phosphate</name>
        <dbReference type="ChEBI" id="CHEBI:58228"/>
    </ligand>
</feature>
<feature type="binding site" evidence="2">
    <location>
        <position position="168"/>
    </location>
    <ligand>
        <name>L-ornithine</name>
        <dbReference type="ChEBI" id="CHEBI:46911"/>
    </ligand>
</feature>
<feature type="binding site" evidence="2">
    <location>
        <position position="232"/>
    </location>
    <ligand>
        <name>L-ornithine</name>
        <dbReference type="ChEBI" id="CHEBI:46911"/>
    </ligand>
</feature>
<feature type="binding site" evidence="2">
    <location>
        <begin position="236"/>
        <end position="237"/>
    </location>
    <ligand>
        <name>L-ornithine</name>
        <dbReference type="ChEBI" id="CHEBI:46911"/>
    </ligand>
</feature>
<feature type="binding site" evidence="2">
    <location>
        <begin position="273"/>
        <end position="274"/>
    </location>
    <ligand>
        <name>carbamoyl phosphate</name>
        <dbReference type="ChEBI" id="CHEBI:58228"/>
    </ligand>
</feature>
<feature type="binding site" evidence="2">
    <location>
        <position position="313"/>
    </location>
    <ligand>
        <name>carbamoyl phosphate</name>
        <dbReference type="ChEBI" id="CHEBI:58228"/>
    </ligand>
</feature>
<feature type="sequence conflict" description="In Ref. 1; CAA39136." evidence="11" ref="1">
    <original>R</original>
    <variation>P</variation>
    <location>
        <position position="153"/>
    </location>
</feature>
<feature type="sequence conflict" description="In Ref. 1; CAA39136." evidence="11" ref="1">
    <original>E</original>
    <variation>Q</variation>
    <location>
        <position position="293"/>
    </location>
</feature>
<sequence length="327" mass="36562">MKITSLKNRNLLTMNEFNQSELSHLIDRAIECKRLKKDRIFNLGLNHLNICGIFLKPSGRTSTSFVVASYDEGAHFQFFPADNIRFGHKESIKDFARVVGRLFDGIAFRGFEHEVAEELAKHSGIPVWNALTDTHHPTQVLADVMTVKEEFGRIEGVTIAYVGDGRNNMVTSLAIGALKFGYNLRIIAPNALHPTDAVLAGIYEQTPERNGSIEIFTEVAAGVHQADVIYTDVWISMGESVSVEERIALLKPYKVTEKMMALTGKADTIFMHCLPAFHDLDTEVARETPDLVEVEDSVFEGPQSRVFDQGENRMHTIKALMLETVVP</sequence>